<comment type="function">
    <text evidence="1">Catalyzes the ATP-dependent phosphorylation of thiamine-monophosphate (TMP) to form thiamine-pyrophosphate (TPP), the active form of vitamin B1.</text>
</comment>
<comment type="catalytic activity">
    <reaction evidence="1">
        <text>thiamine phosphate + ATP = thiamine diphosphate + ADP</text>
        <dbReference type="Rhea" id="RHEA:15913"/>
        <dbReference type="ChEBI" id="CHEBI:30616"/>
        <dbReference type="ChEBI" id="CHEBI:37575"/>
        <dbReference type="ChEBI" id="CHEBI:58937"/>
        <dbReference type="ChEBI" id="CHEBI:456216"/>
        <dbReference type="EC" id="2.7.4.16"/>
    </reaction>
</comment>
<comment type="pathway">
    <text evidence="1">Cofactor biosynthesis; thiamine diphosphate biosynthesis; thiamine diphosphate from thiamine phosphate: step 1/1.</text>
</comment>
<comment type="miscellaneous">
    <text evidence="1">Reaction mechanism of ThiL seems to utilize a direct, inline transfer of the gamma-phosphate of ATP to TMP rather than a phosphorylated enzyme intermediate.</text>
</comment>
<comment type="similarity">
    <text evidence="1">Belongs to the thiamine-monophosphate kinase family.</text>
</comment>
<dbReference type="EC" id="2.7.4.16" evidence="1"/>
<dbReference type="EMBL" id="AE013218">
    <property type="protein sequence ID" value="AAM67987.1"/>
    <property type="molecule type" value="Genomic_DNA"/>
</dbReference>
<dbReference type="RefSeq" id="WP_011053954.1">
    <property type="nucleotide sequence ID" value="NC_004061.1"/>
</dbReference>
<dbReference type="SMR" id="Q8K9A5"/>
<dbReference type="STRING" id="198804.BUsg_444"/>
<dbReference type="GeneID" id="93003917"/>
<dbReference type="KEGG" id="bas:BUsg_444"/>
<dbReference type="eggNOG" id="COG0611">
    <property type="taxonomic scope" value="Bacteria"/>
</dbReference>
<dbReference type="HOGENOM" id="CLU_046964_3_0_6"/>
<dbReference type="UniPathway" id="UPA00060">
    <property type="reaction ID" value="UER00142"/>
</dbReference>
<dbReference type="Proteomes" id="UP000000416">
    <property type="component" value="Chromosome"/>
</dbReference>
<dbReference type="GO" id="GO:0005524">
    <property type="term" value="F:ATP binding"/>
    <property type="evidence" value="ECO:0007669"/>
    <property type="project" value="UniProtKB-UniRule"/>
</dbReference>
<dbReference type="GO" id="GO:0000287">
    <property type="term" value="F:magnesium ion binding"/>
    <property type="evidence" value="ECO:0007669"/>
    <property type="project" value="UniProtKB-UniRule"/>
</dbReference>
<dbReference type="GO" id="GO:0009030">
    <property type="term" value="F:thiamine-phosphate kinase activity"/>
    <property type="evidence" value="ECO:0007669"/>
    <property type="project" value="UniProtKB-UniRule"/>
</dbReference>
<dbReference type="GO" id="GO:0009228">
    <property type="term" value="P:thiamine biosynthetic process"/>
    <property type="evidence" value="ECO:0007669"/>
    <property type="project" value="UniProtKB-KW"/>
</dbReference>
<dbReference type="GO" id="GO:0009229">
    <property type="term" value="P:thiamine diphosphate biosynthetic process"/>
    <property type="evidence" value="ECO:0007669"/>
    <property type="project" value="UniProtKB-UniRule"/>
</dbReference>
<dbReference type="CDD" id="cd02194">
    <property type="entry name" value="ThiL"/>
    <property type="match status" value="1"/>
</dbReference>
<dbReference type="Gene3D" id="3.90.650.10">
    <property type="entry name" value="PurM-like C-terminal domain"/>
    <property type="match status" value="1"/>
</dbReference>
<dbReference type="Gene3D" id="3.30.1330.10">
    <property type="entry name" value="PurM-like, N-terminal domain"/>
    <property type="match status" value="1"/>
</dbReference>
<dbReference type="HAMAP" id="MF_02128">
    <property type="entry name" value="TMP_kinase"/>
    <property type="match status" value="1"/>
</dbReference>
<dbReference type="InterPro" id="IPR010918">
    <property type="entry name" value="PurM-like_C_dom"/>
</dbReference>
<dbReference type="InterPro" id="IPR036676">
    <property type="entry name" value="PurM-like_C_sf"/>
</dbReference>
<dbReference type="InterPro" id="IPR016188">
    <property type="entry name" value="PurM-like_N"/>
</dbReference>
<dbReference type="InterPro" id="IPR036921">
    <property type="entry name" value="PurM-like_N_sf"/>
</dbReference>
<dbReference type="InterPro" id="IPR006283">
    <property type="entry name" value="ThiL-like"/>
</dbReference>
<dbReference type="NCBIfam" id="TIGR01379">
    <property type="entry name" value="thiL"/>
    <property type="match status" value="1"/>
</dbReference>
<dbReference type="PANTHER" id="PTHR30270">
    <property type="entry name" value="THIAMINE-MONOPHOSPHATE KINASE"/>
    <property type="match status" value="1"/>
</dbReference>
<dbReference type="PANTHER" id="PTHR30270:SF0">
    <property type="entry name" value="THIAMINE-MONOPHOSPHATE KINASE"/>
    <property type="match status" value="1"/>
</dbReference>
<dbReference type="Pfam" id="PF00586">
    <property type="entry name" value="AIRS"/>
    <property type="match status" value="1"/>
</dbReference>
<dbReference type="Pfam" id="PF02769">
    <property type="entry name" value="AIRS_C"/>
    <property type="match status" value="1"/>
</dbReference>
<dbReference type="PIRSF" id="PIRSF005303">
    <property type="entry name" value="Thiam_monoph_kin"/>
    <property type="match status" value="1"/>
</dbReference>
<dbReference type="SUPFAM" id="SSF56042">
    <property type="entry name" value="PurM C-terminal domain-like"/>
    <property type="match status" value="1"/>
</dbReference>
<dbReference type="SUPFAM" id="SSF55326">
    <property type="entry name" value="PurM N-terminal domain-like"/>
    <property type="match status" value="1"/>
</dbReference>
<keyword id="KW-0067">ATP-binding</keyword>
<keyword id="KW-0418">Kinase</keyword>
<keyword id="KW-0460">Magnesium</keyword>
<keyword id="KW-0479">Metal-binding</keyword>
<keyword id="KW-0547">Nucleotide-binding</keyword>
<keyword id="KW-0784">Thiamine biosynthesis</keyword>
<keyword id="KW-0808">Transferase</keyword>
<evidence type="ECO:0000255" key="1">
    <source>
        <dbReference type="HAMAP-Rule" id="MF_02128"/>
    </source>
</evidence>
<gene>
    <name evidence="1" type="primary">thiL</name>
    <name type="ordered locus">BUsg_444</name>
</gene>
<sequence>MEYNEFEIISKFFKNHQKKDKNQIKGIGDDSALIKIPKNNLLAISTDTLVEGKHFLKNITPKDLAYKSVAVNLSDLAAMGAKPTWITLSITMPKSDSVWLKSFSKSFFKILNKYKLNLIGGDTNSGPLSITLSIYGLIEGKNALLRGNAKNGDLIYITGNLGESAAGLSLLQKKTFLKNVKICNYLIKKHLKPIPRISEGIALRNIANAAIDISDGLISDLGHILKNSKCGADINLNTIPISKILTDNFKIDEYLNWALNSGEDYELCFTISKKNIKKLNVAIKKKIIKCTCIGYITSAEKGLNLIQNQKKIIFKKSGFNHFI</sequence>
<name>THIL_BUCAP</name>
<feature type="chain" id="PRO_0000096193" description="Thiamine-monophosphate kinase">
    <location>
        <begin position="1"/>
        <end position="323"/>
    </location>
</feature>
<feature type="binding site" evidence="1">
    <location>
        <position position="30"/>
    </location>
    <ligand>
        <name>Mg(2+)</name>
        <dbReference type="ChEBI" id="CHEBI:18420"/>
        <label>3</label>
    </ligand>
</feature>
<feature type="binding site" evidence="1">
    <location>
        <position position="30"/>
    </location>
    <ligand>
        <name>Mg(2+)</name>
        <dbReference type="ChEBI" id="CHEBI:18420"/>
        <label>4</label>
    </ligand>
</feature>
<feature type="binding site" evidence="1">
    <location>
        <position position="45"/>
    </location>
    <ligand>
        <name>Mg(2+)</name>
        <dbReference type="ChEBI" id="CHEBI:18420"/>
        <label>4</label>
    </ligand>
</feature>
<feature type="binding site" evidence="1">
    <location>
        <position position="46"/>
    </location>
    <ligand>
        <name>Mg(2+)</name>
        <dbReference type="ChEBI" id="CHEBI:18420"/>
        <label>1</label>
    </ligand>
</feature>
<feature type="binding site" evidence="1">
    <location>
        <position position="47"/>
    </location>
    <ligand>
        <name>Mg(2+)</name>
        <dbReference type="ChEBI" id="CHEBI:18420"/>
        <label>1</label>
    </ligand>
</feature>
<feature type="binding site" evidence="1">
    <location>
        <position position="47"/>
    </location>
    <ligand>
        <name>Mg(2+)</name>
        <dbReference type="ChEBI" id="CHEBI:18420"/>
        <label>2</label>
    </ligand>
</feature>
<feature type="binding site" evidence="1">
    <location>
        <position position="54"/>
    </location>
    <ligand>
        <name>substrate</name>
    </ligand>
</feature>
<feature type="binding site" evidence="1">
    <location>
        <position position="75"/>
    </location>
    <ligand>
        <name>Mg(2+)</name>
        <dbReference type="ChEBI" id="CHEBI:18420"/>
        <label>2</label>
    </ligand>
</feature>
<feature type="binding site" evidence="1">
    <location>
        <position position="75"/>
    </location>
    <ligand>
        <name>Mg(2+)</name>
        <dbReference type="ChEBI" id="CHEBI:18420"/>
        <label>3</label>
    </ligand>
</feature>
<feature type="binding site" evidence="1">
    <location>
        <position position="75"/>
    </location>
    <ligand>
        <name>Mg(2+)</name>
        <dbReference type="ChEBI" id="CHEBI:18420"/>
        <label>4</label>
    </ligand>
</feature>
<feature type="binding site" evidence="1">
    <location>
        <begin position="121"/>
        <end position="122"/>
    </location>
    <ligand>
        <name>ATP</name>
        <dbReference type="ChEBI" id="CHEBI:30616"/>
    </ligand>
</feature>
<feature type="binding site" evidence="1">
    <location>
        <position position="122"/>
    </location>
    <ligand>
        <name>Mg(2+)</name>
        <dbReference type="ChEBI" id="CHEBI:18420"/>
        <label>1</label>
    </ligand>
</feature>
<feature type="binding site" evidence="1">
    <location>
        <position position="146"/>
    </location>
    <ligand>
        <name>ATP</name>
        <dbReference type="ChEBI" id="CHEBI:30616"/>
    </ligand>
</feature>
<feature type="binding site" evidence="1">
    <location>
        <position position="212"/>
    </location>
    <ligand>
        <name>Mg(2+)</name>
        <dbReference type="ChEBI" id="CHEBI:18420"/>
        <label>3</label>
    </ligand>
</feature>
<feature type="binding site" evidence="1">
    <location>
        <position position="214"/>
    </location>
    <ligand>
        <name>ATP</name>
        <dbReference type="ChEBI" id="CHEBI:30616"/>
    </ligand>
</feature>
<feature type="binding site" evidence="1">
    <location>
        <position position="215"/>
    </location>
    <ligand>
        <name>Mg(2+)</name>
        <dbReference type="ChEBI" id="CHEBI:18420"/>
        <label>5</label>
    </ligand>
</feature>
<feature type="binding site" evidence="1">
    <location>
        <position position="263"/>
    </location>
    <ligand>
        <name>substrate</name>
    </ligand>
</feature>
<feature type="binding site" evidence="1">
    <location>
        <position position="319"/>
    </location>
    <ligand>
        <name>substrate</name>
    </ligand>
</feature>
<proteinExistence type="inferred from homology"/>
<accession>Q8K9A5</accession>
<protein>
    <recommendedName>
        <fullName evidence="1">Thiamine-monophosphate kinase</fullName>
        <shortName evidence="1">TMP kinase</shortName>
        <shortName evidence="1">Thiamine-phosphate kinase</shortName>
        <ecNumber evidence="1">2.7.4.16</ecNumber>
    </recommendedName>
</protein>
<reference key="1">
    <citation type="journal article" date="2002" name="Science">
        <title>50 million years of genomic stasis in endosymbiotic bacteria.</title>
        <authorList>
            <person name="Tamas I."/>
            <person name="Klasson L."/>
            <person name="Canbaeck B."/>
            <person name="Naeslund A.K."/>
            <person name="Eriksson A.-S."/>
            <person name="Wernegreen J.J."/>
            <person name="Sandstroem J.P."/>
            <person name="Moran N.A."/>
            <person name="Andersson S.G.E."/>
        </authorList>
    </citation>
    <scope>NUCLEOTIDE SEQUENCE [LARGE SCALE GENOMIC DNA]</scope>
    <source>
        <strain>Sg</strain>
    </source>
</reference>
<organism>
    <name type="scientific">Buchnera aphidicola subsp. Schizaphis graminum (strain Sg)</name>
    <dbReference type="NCBI Taxonomy" id="198804"/>
    <lineage>
        <taxon>Bacteria</taxon>
        <taxon>Pseudomonadati</taxon>
        <taxon>Pseudomonadota</taxon>
        <taxon>Gammaproteobacteria</taxon>
        <taxon>Enterobacterales</taxon>
        <taxon>Erwiniaceae</taxon>
        <taxon>Buchnera</taxon>
    </lineage>
</organism>